<keyword id="KW-1185">Reference proteome</keyword>
<feature type="chain" id="PRO_0000215680" description="ATP-dependent Clp protease adapter protein ClpS 1">
    <location>
        <begin position="1"/>
        <end position="117"/>
    </location>
</feature>
<protein>
    <recommendedName>
        <fullName evidence="1">ATP-dependent Clp protease adapter protein ClpS 1</fullName>
    </recommendedName>
</protein>
<gene>
    <name evidence="1" type="primary">clpS1</name>
    <name type="ordered locus">Atu1363</name>
    <name type="ORF">AGR_C_2522</name>
</gene>
<reference key="1">
    <citation type="journal article" date="2001" name="Science">
        <title>The genome of the natural genetic engineer Agrobacterium tumefaciens C58.</title>
        <authorList>
            <person name="Wood D.W."/>
            <person name="Setubal J.C."/>
            <person name="Kaul R."/>
            <person name="Monks D.E."/>
            <person name="Kitajima J.P."/>
            <person name="Okura V.K."/>
            <person name="Zhou Y."/>
            <person name="Chen L."/>
            <person name="Wood G.E."/>
            <person name="Almeida N.F. Jr."/>
            <person name="Woo L."/>
            <person name="Chen Y."/>
            <person name="Paulsen I.T."/>
            <person name="Eisen J.A."/>
            <person name="Karp P.D."/>
            <person name="Bovee D. Sr."/>
            <person name="Chapman P."/>
            <person name="Clendenning J."/>
            <person name="Deatherage G."/>
            <person name="Gillet W."/>
            <person name="Grant C."/>
            <person name="Kutyavin T."/>
            <person name="Levy R."/>
            <person name="Li M.-J."/>
            <person name="McClelland E."/>
            <person name="Palmieri A."/>
            <person name="Raymond C."/>
            <person name="Rouse G."/>
            <person name="Saenphimmachak C."/>
            <person name="Wu Z."/>
            <person name="Romero P."/>
            <person name="Gordon D."/>
            <person name="Zhang S."/>
            <person name="Yoo H."/>
            <person name="Tao Y."/>
            <person name="Biddle P."/>
            <person name="Jung M."/>
            <person name="Krespan W."/>
            <person name="Perry M."/>
            <person name="Gordon-Kamm B."/>
            <person name="Liao L."/>
            <person name="Kim S."/>
            <person name="Hendrick C."/>
            <person name="Zhao Z.-Y."/>
            <person name="Dolan M."/>
            <person name="Chumley F."/>
            <person name="Tingey S.V."/>
            <person name="Tomb J.-F."/>
            <person name="Gordon M.P."/>
            <person name="Olson M.V."/>
            <person name="Nester E.W."/>
        </authorList>
    </citation>
    <scope>NUCLEOTIDE SEQUENCE [LARGE SCALE GENOMIC DNA]</scope>
    <source>
        <strain>C58 / ATCC 33970</strain>
    </source>
</reference>
<reference key="2">
    <citation type="journal article" date="2001" name="Science">
        <title>Genome sequence of the plant pathogen and biotechnology agent Agrobacterium tumefaciens C58.</title>
        <authorList>
            <person name="Goodner B."/>
            <person name="Hinkle G."/>
            <person name="Gattung S."/>
            <person name="Miller N."/>
            <person name="Blanchard M."/>
            <person name="Qurollo B."/>
            <person name="Goldman B.S."/>
            <person name="Cao Y."/>
            <person name="Askenazi M."/>
            <person name="Halling C."/>
            <person name="Mullin L."/>
            <person name="Houmiel K."/>
            <person name="Gordon J."/>
            <person name="Vaudin M."/>
            <person name="Iartchouk O."/>
            <person name="Epp A."/>
            <person name="Liu F."/>
            <person name="Wollam C."/>
            <person name="Allinger M."/>
            <person name="Doughty D."/>
            <person name="Scott C."/>
            <person name="Lappas C."/>
            <person name="Markelz B."/>
            <person name="Flanagan C."/>
            <person name="Crowell C."/>
            <person name="Gurson J."/>
            <person name="Lomo C."/>
            <person name="Sear C."/>
            <person name="Strub G."/>
            <person name="Cielo C."/>
            <person name="Slater S."/>
        </authorList>
    </citation>
    <scope>NUCLEOTIDE SEQUENCE [LARGE SCALE GENOMIC DNA]</scope>
    <source>
        <strain>C58 / ATCC 33970</strain>
    </source>
</reference>
<organism>
    <name type="scientific">Agrobacterium fabrum (strain C58 / ATCC 33970)</name>
    <name type="common">Agrobacterium tumefaciens (strain C58)</name>
    <dbReference type="NCBI Taxonomy" id="176299"/>
    <lineage>
        <taxon>Bacteria</taxon>
        <taxon>Pseudomonadati</taxon>
        <taxon>Pseudomonadota</taxon>
        <taxon>Alphaproteobacteria</taxon>
        <taxon>Hyphomicrobiales</taxon>
        <taxon>Rhizobiaceae</taxon>
        <taxon>Rhizobium/Agrobacterium group</taxon>
        <taxon>Agrobacterium</taxon>
        <taxon>Agrobacterium tumefaciens complex</taxon>
    </lineage>
</organism>
<comment type="function">
    <text evidence="1">Involved in the modulation of the specificity of the ClpAP-mediated ATP-dependent protein degradation.</text>
</comment>
<comment type="subunit">
    <text evidence="1">Binds to the N-terminal domain of the chaperone ClpA.</text>
</comment>
<comment type="similarity">
    <text evidence="1">Belongs to the ClpS family.</text>
</comment>
<proteinExistence type="inferred from homology"/>
<name>CLPS1_AGRFC</name>
<sequence>MIAKPIYMQGEGDGEDGGTNRGTSVITRVKPKTKRPNLYRVLLLNDDYTPMEFVIHILERFFQKDREAATRIMLHVHQHGVGECGVFTYEVAETKVSQVMDFARQHQHPLQCVMEKK</sequence>
<evidence type="ECO:0000255" key="1">
    <source>
        <dbReference type="HAMAP-Rule" id="MF_00302"/>
    </source>
</evidence>
<accession>Q8UFN4</accession>
<dbReference type="EMBL" id="AE007869">
    <property type="protein sequence ID" value="AAK87155.1"/>
    <property type="molecule type" value="Genomic_DNA"/>
</dbReference>
<dbReference type="PIR" id="AC2744">
    <property type="entry name" value="AC2744"/>
</dbReference>
<dbReference type="PIR" id="B97525">
    <property type="entry name" value="B97525"/>
</dbReference>
<dbReference type="RefSeq" id="NP_354370.1">
    <property type="nucleotide sequence ID" value="NC_003062.2"/>
</dbReference>
<dbReference type="RefSeq" id="WP_006312564.1">
    <property type="nucleotide sequence ID" value="NC_003062.2"/>
</dbReference>
<dbReference type="SMR" id="Q8UFN4"/>
<dbReference type="STRING" id="176299.Atu1363"/>
<dbReference type="EnsemblBacteria" id="AAK87155">
    <property type="protein sequence ID" value="AAK87155"/>
    <property type="gene ID" value="Atu1363"/>
</dbReference>
<dbReference type="GeneID" id="1133401"/>
<dbReference type="KEGG" id="atu:Atu1363"/>
<dbReference type="PATRIC" id="fig|176299.10.peg.1384"/>
<dbReference type="eggNOG" id="COG2127">
    <property type="taxonomic scope" value="Bacteria"/>
</dbReference>
<dbReference type="HOGENOM" id="CLU_134358_0_0_5"/>
<dbReference type="OrthoDB" id="9796121at2"/>
<dbReference type="PhylomeDB" id="Q8UFN4"/>
<dbReference type="BioCyc" id="AGRO:ATU1363-MONOMER"/>
<dbReference type="Proteomes" id="UP000000813">
    <property type="component" value="Chromosome circular"/>
</dbReference>
<dbReference type="GO" id="GO:0030163">
    <property type="term" value="P:protein catabolic process"/>
    <property type="evidence" value="ECO:0007669"/>
    <property type="project" value="InterPro"/>
</dbReference>
<dbReference type="GO" id="GO:0006508">
    <property type="term" value="P:proteolysis"/>
    <property type="evidence" value="ECO:0007669"/>
    <property type="project" value="UniProtKB-UniRule"/>
</dbReference>
<dbReference type="FunFam" id="3.30.1390.10:FF:000002">
    <property type="entry name" value="ATP-dependent Clp protease adapter protein ClpS"/>
    <property type="match status" value="1"/>
</dbReference>
<dbReference type="Gene3D" id="3.30.1390.10">
    <property type="match status" value="1"/>
</dbReference>
<dbReference type="HAMAP" id="MF_00302">
    <property type="entry name" value="ClpS"/>
    <property type="match status" value="1"/>
</dbReference>
<dbReference type="InterPro" id="IPR022935">
    <property type="entry name" value="ClpS"/>
</dbReference>
<dbReference type="InterPro" id="IPR003769">
    <property type="entry name" value="ClpS_core"/>
</dbReference>
<dbReference type="InterPro" id="IPR014719">
    <property type="entry name" value="Ribosomal_bL12_C/ClpS-like"/>
</dbReference>
<dbReference type="NCBIfam" id="NF000669">
    <property type="entry name" value="PRK00033.1-2"/>
    <property type="match status" value="1"/>
</dbReference>
<dbReference type="NCBIfam" id="NF000672">
    <property type="entry name" value="PRK00033.1-5"/>
    <property type="match status" value="1"/>
</dbReference>
<dbReference type="PANTHER" id="PTHR33473:SF19">
    <property type="entry name" value="ATP-DEPENDENT CLP PROTEASE ADAPTER PROTEIN CLPS"/>
    <property type="match status" value="1"/>
</dbReference>
<dbReference type="PANTHER" id="PTHR33473">
    <property type="entry name" value="ATP-DEPENDENT CLP PROTEASE ADAPTER PROTEIN CLPS1, CHLOROPLASTIC"/>
    <property type="match status" value="1"/>
</dbReference>
<dbReference type="Pfam" id="PF02617">
    <property type="entry name" value="ClpS"/>
    <property type="match status" value="1"/>
</dbReference>
<dbReference type="SUPFAM" id="SSF54736">
    <property type="entry name" value="ClpS-like"/>
    <property type="match status" value="1"/>
</dbReference>